<name>CE2A_CELJU</name>
<protein>
    <recommendedName>
        <fullName evidence="4">Acetylxylan esterase / glucomannan deacetylase</fullName>
        <ecNumber evidence="2">3.1.1.-</ecNumber>
        <ecNumber evidence="2">3.1.1.72</ecNumber>
    </recommendedName>
    <alternativeName>
        <fullName evidence="3">CjCE2A</fullName>
    </alternativeName>
</protein>
<proteinExistence type="evidence at protein level"/>
<comment type="function">
    <text evidence="2">Involved in the degradation of plant cell wall polysaccharides. Catalyzes the deacetylation of acetylated birchwood xylan and glucomannan, with equal efficiency, and of the synthetic substrate 4-nitrophenyl acetate (4-NPAc). Does not bind cellulose, cellohexaose and beta-glucan.</text>
</comment>
<comment type="catalytic activity">
    <reaction evidence="2">
        <text>Deacetylation of xylans and xylo-oligosaccharides.</text>
        <dbReference type="EC" id="3.1.1.72"/>
    </reaction>
</comment>
<comment type="biophysicochemical properties">
    <kinetics>
        <KM evidence="2">339 uM for 4-nitrophenyl acetate</KM>
        <KM evidence="2">1.5 mM for acetylated birchwood xylan</KM>
        <KM evidence="2">4.2 mM for acetylated glucomannan</KM>
        <text evidence="2">kcat is 7717 min(-1) for the deacetylation of 4-nitrophenyl acetate. kcat is 69 min(-1) for the deacetylation of birchwood xylan. kcat is 163 min(-1) for the deacetylation of glucomannan.</text>
    </kinetics>
</comment>
<comment type="pathway">
    <text evidence="2">Glycan degradation; xylan degradation.</text>
</comment>
<comment type="subcellular location">
    <subcellularLocation>
        <location evidence="1">Cell membrane</location>
        <topology evidence="1">Lipid-anchor</topology>
    </subcellularLocation>
</comment>
<comment type="similarity">
    <text evidence="4">Belongs to the carbohydrate esterase 2 (CE2) family.</text>
</comment>
<reference key="1">
    <citation type="journal article" date="2008" name="J. Bacteriol.">
        <title>Insights into plant cell wall degradation from the genome sequence of the soil bacterium Cellvibrio japonicus.</title>
        <authorList>
            <person name="DeBoy R.T."/>
            <person name="Mongodin E.F."/>
            <person name="Fouts D.E."/>
            <person name="Tailford L.E."/>
            <person name="Khouri H."/>
            <person name="Emerson J.B."/>
            <person name="Mohamoud Y."/>
            <person name="Watkins K."/>
            <person name="Henrissat B."/>
            <person name="Gilbert H.J."/>
            <person name="Nelson K.E."/>
        </authorList>
    </citation>
    <scope>NUCLEOTIDE SEQUENCE [LARGE SCALE GENOMIC DNA]</scope>
    <source>
        <strain>Ueda107</strain>
    </source>
</reference>
<reference key="2">
    <citation type="journal article" date="2009" name="PLoS Biol.">
        <title>The active site of a carbohydrate esterase displays divergent catalytic and noncatalytic binding functions.</title>
        <authorList>
            <person name="Montanier C."/>
            <person name="Money V.A."/>
            <person name="Pires V.M."/>
            <person name="Flint J.E."/>
            <person name="Pinheiro B.A."/>
            <person name="Goyal A."/>
            <person name="Prates J.A."/>
            <person name="Izumi A."/>
            <person name="Stalbrand H."/>
            <person name="Morland C."/>
            <person name="Cartmell A."/>
            <person name="Kolenova K."/>
            <person name="Topakas E."/>
            <person name="Dodson E.J."/>
            <person name="Bolam D.N."/>
            <person name="Davies G.J."/>
            <person name="Fontes C.M."/>
            <person name="Gilbert H.J."/>
        </authorList>
    </citation>
    <scope>X-RAY CRYSTALLOGRAPHY (1.80 ANGSTROMS) OF 21-358</scope>
    <scope>FUNCTION</scope>
    <scope>CATALYTIC ACTIVITY</scope>
    <scope>BIOPHYSICOCHEMICAL PROPERTIES</scope>
    <scope>ACTIVE SITE</scope>
</reference>
<feature type="signal peptide" evidence="1">
    <location>
        <begin position="1"/>
        <end position="18"/>
    </location>
</feature>
<feature type="chain" id="PRO_0000434123" description="Acetylxylan esterase / glucomannan deacetylase">
    <location>
        <begin position="19"/>
        <end position="358"/>
    </location>
</feature>
<feature type="active site" description="Nucleophile" evidence="4">
    <location>
        <position position="160"/>
    </location>
</feature>
<feature type="active site" description="Charge relay system" evidence="4">
    <location>
        <position position="333"/>
    </location>
</feature>
<feature type="active site" description="Charge relay system" evidence="4">
    <location>
        <position position="335"/>
    </location>
</feature>
<feature type="site" description="Transition state stabilizer" evidence="4">
    <location>
        <position position="205"/>
    </location>
</feature>
<feature type="site" description="Transition state stabilizer" evidence="4">
    <location>
        <position position="255"/>
    </location>
</feature>
<feature type="lipid moiety-binding region" description="N-palmitoyl cysteine" evidence="1">
    <location>
        <position position="19"/>
    </location>
</feature>
<feature type="lipid moiety-binding region" description="S-diacylglycerol cysteine" evidence="1">
    <location>
        <position position="19"/>
    </location>
</feature>
<feature type="strand" evidence="6">
    <location>
        <begin position="29"/>
        <end position="36"/>
    </location>
</feature>
<feature type="strand" evidence="6">
    <location>
        <begin position="39"/>
        <end position="43"/>
    </location>
</feature>
<feature type="strand" evidence="6">
    <location>
        <begin position="53"/>
        <end position="55"/>
    </location>
</feature>
<feature type="strand" evidence="6">
    <location>
        <begin position="61"/>
        <end position="80"/>
    </location>
</feature>
<feature type="strand" evidence="6">
    <location>
        <begin position="82"/>
        <end position="88"/>
    </location>
</feature>
<feature type="strand" evidence="6">
    <location>
        <begin position="94"/>
        <end position="98"/>
    </location>
</feature>
<feature type="strand" evidence="6">
    <location>
        <begin position="103"/>
        <end position="122"/>
    </location>
</feature>
<feature type="helix" evidence="6">
    <location>
        <begin position="126"/>
        <end position="128"/>
    </location>
</feature>
<feature type="strand" evidence="6">
    <location>
        <begin position="131"/>
        <end position="143"/>
    </location>
</feature>
<feature type="strand" evidence="6">
    <location>
        <begin position="151"/>
        <end position="159"/>
    </location>
</feature>
<feature type="turn" evidence="6">
    <location>
        <begin position="160"/>
        <end position="168"/>
    </location>
</feature>
<feature type="helix" evidence="6">
    <location>
        <begin position="177"/>
        <end position="179"/>
    </location>
</feature>
<feature type="helix" evidence="6">
    <location>
        <begin position="186"/>
        <end position="193"/>
    </location>
</feature>
<feature type="strand" evidence="6">
    <location>
        <begin position="196"/>
        <end position="202"/>
    </location>
</feature>
<feature type="strand" evidence="6">
    <location>
        <begin position="216"/>
        <end position="218"/>
    </location>
</feature>
<feature type="helix" evidence="6">
    <location>
        <begin position="221"/>
        <end position="224"/>
    </location>
</feature>
<feature type="strand" evidence="6">
    <location>
        <begin position="227"/>
        <end position="229"/>
    </location>
</feature>
<feature type="helix" evidence="6">
    <location>
        <begin position="240"/>
        <end position="242"/>
    </location>
</feature>
<feature type="strand" evidence="6">
    <location>
        <begin position="246"/>
        <end position="250"/>
    </location>
</feature>
<feature type="helix" evidence="6">
    <location>
        <begin position="254"/>
        <end position="257"/>
    </location>
</feature>
<feature type="strand" evidence="6">
    <location>
        <begin position="258"/>
        <end position="260"/>
    </location>
</feature>
<feature type="helix" evidence="6">
    <location>
        <begin position="264"/>
        <end position="281"/>
    </location>
</feature>
<feature type="strand" evidence="6">
    <location>
        <begin position="286"/>
        <end position="289"/>
    </location>
</feature>
<feature type="helix" evidence="6">
    <location>
        <begin position="297"/>
        <end position="314"/>
    </location>
</feature>
<feature type="strand" evidence="6">
    <location>
        <begin position="319"/>
        <end position="321"/>
    </location>
</feature>
<feature type="strand" evidence="6">
    <location>
        <begin position="333"/>
        <end position="335"/>
    </location>
</feature>
<feature type="helix" evidence="6">
    <location>
        <begin position="338"/>
        <end position="356"/>
    </location>
</feature>
<sequence length="358" mass="39779">MKLLFPILLLTGSYFLSACNNTQSLMSSTHTIAASDPHIQVMGRTHINDDASLTFGYPGVSLSTIVAGSRLTAEMQSSNGNSWIDVIIDNHPPTSIKLDAQQQTVELFHFPNSGEHRVEIIHRSENWHGQVTLKQLTLTGTQFLPAPVLPQRKILVLGDSVTCGEAIDRVAGEDKNTRWWNARESYGMLTAKALDAQVQLVCWGGRGLIRSWNGKTDDANLPDFYQFTLGDTGQAPQWDHHRYQPDLIISAIGTNDFSPGIPDRATYINTYTRFVRTLLDNHPQATIVLTEGAILNGDKKAALVSYIGETRQQLHSNRVFYASSSHHPGDNSDAHPTKDQHAAMARELTPQLRQIMDW</sequence>
<accession>B3PIB0</accession>
<dbReference type="EC" id="3.1.1.-" evidence="2"/>
<dbReference type="EC" id="3.1.1.72" evidence="2"/>
<dbReference type="EMBL" id="CP000934">
    <property type="protein sequence ID" value="ACE84991.1"/>
    <property type="molecule type" value="Genomic_DNA"/>
</dbReference>
<dbReference type="PDB" id="2WAA">
    <property type="method" value="X-ray"/>
    <property type="resolution" value="1.80 A"/>
    <property type="chains" value="A=21-358"/>
</dbReference>
<dbReference type="PDBsum" id="2WAA"/>
<dbReference type="SMR" id="B3PIB0"/>
<dbReference type="STRING" id="498211.CJA_0450"/>
<dbReference type="KEGG" id="cja:CJA_0450"/>
<dbReference type="eggNOG" id="COG2755">
    <property type="taxonomic scope" value="Bacteria"/>
</dbReference>
<dbReference type="HOGENOM" id="CLU_042506_2_0_6"/>
<dbReference type="OrthoDB" id="9801375at2"/>
<dbReference type="UniPathway" id="UPA00114"/>
<dbReference type="EvolutionaryTrace" id="B3PIB0"/>
<dbReference type="Proteomes" id="UP000001036">
    <property type="component" value="Chromosome"/>
</dbReference>
<dbReference type="GO" id="GO:0005886">
    <property type="term" value="C:plasma membrane"/>
    <property type="evidence" value="ECO:0007669"/>
    <property type="project" value="UniProtKB-SubCell"/>
</dbReference>
<dbReference type="GO" id="GO:0046555">
    <property type="term" value="F:acetylxylan esterase activity"/>
    <property type="evidence" value="ECO:0000314"/>
    <property type="project" value="UniProtKB"/>
</dbReference>
<dbReference type="GO" id="GO:0016798">
    <property type="term" value="F:hydrolase activity, acting on glycosyl bonds"/>
    <property type="evidence" value="ECO:0007669"/>
    <property type="project" value="UniProtKB-KW"/>
</dbReference>
<dbReference type="GO" id="GO:2000884">
    <property type="term" value="P:glucomannan catabolic process"/>
    <property type="evidence" value="ECO:0000314"/>
    <property type="project" value="UniProtKB"/>
</dbReference>
<dbReference type="GO" id="GO:0045493">
    <property type="term" value="P:xylan catabolic process"/>
    <property type="evidence" value="ECO:0000314"/>
    <property type="project" value="UniProtKB"/>
</dbReference>
<dbReference type="CDD" id="cd01831">
    <property type="entry name" value="Endoglucanase_E_like"/>
    <property type="match status" value="1"/>
</dbReference>
<dbReference type="Gene3D" id="2.60.120.260">
    <property type="entry name" value="Galactose-binding domain-like"/>
    <property type="match status" value="1"/>
</dbReference>
<dbReference type="Gene3D" id="3.40.50.1110">
    <property type="entry name" value="SGNH hydrolase"/>
    <property type="match status" value="1"/>
</dbReference>
<dbReference type="InterPro" id="IPR040794">
    <property type="entry name" value="CE2_N"/>
</dbReference>
<dbReference type="InterPro" id="IPR050040">
    <property type="entry name" value="CE2A"/>
</dbReference>
<dbReference type="InterPro" id="IPR037461">
    <property type="entry name" value="CtCE2-like_dom"/>
</dbReference>
<dbReference type="InterPro" id="IPR052762">
    <property type="entry name" value="PCW_deacetylase/CE"/>
</dbReference>
<dbReference type="InterPro" id="IPR013830">
    <property type="entry name" value="SGNH_hydro"/>
</dbReference>
<dbReference type="InterPro" id="IPR036514">
    <property type="entry name" value="SGNH_hydro_sf"/>
</dbReference>
<dbReference type="NCBIfam" id="NF042969">
    <property type="entry name" value="AcxyGlmanDactase"/>
    <property type="match status" value="1"/>
</dbReference>
<dbReference type="PANTHER" id="PTHR37834:SF2">
    <property type="entry name" value="ESTERASE, SGNH HYDROLASE-TYPE"/>
    <property type="match status" value="1"/>
</dbReference>
<dbReference type="PANTHER" id="PTHR37834">
    <property type="entry name" value="GDSL-LIKE LIPASE/ACYLHYDROLASE DOMAIN PROTEIN (AFU_ORTHOLOGUE AFUA_2G00620)"/>
    <property type="match status" value="1"/>
</dbReference>
<dbReference type="Pfam" id="PF17996">
    <property type="entry name" value="CE2_N"/>
    <property type="match status" value="1"/>
</dbReference>
<dbReference type="Pfam" id="PF13472">
    <property type="entry name" value="Lipase_GDSL_2"/>
    <property type="match status" value="1"/>
</dbReference>
<dbReference type="SUPFAM" id="SSF52266">
    <property type="entry name" value="SGNH hydrolase"/>
    <property type="match status" value="1"/>
</dbReference>
<dbReference type="PROSITE" id="PS51257">
    <property type="entry name" value="PROKAR_LIPOPROTEIN"/>
    <property type="match status" value="1"/>
</dbReference>
<keyword id="KW-0002">3D-structure</keyword>
<keyword id="KW-0119">Carbohydrate metabolism</keyword>
<keyword id="KW-1003">Cell membrane</keyword>
<keyword id="KW-0326">Glycosidase</keyword>
<keyword id="KW-0378">Hydrolase</keyword>
<keyword id="KW-0449">Lipoprotein</keyword>
<keyword id="KW-0472">Membrane</keyword>
<keyword id="KW-0564">Palmitate</keyword>
<keyword id="KW-0624">Polysaccharide degradation</keyword>
<keyword id="KW-1185">Reference proteome</keyword>
<keyword id="KW-0732">Signal</keyword>
<gene>
    <name evidence="5" type="primary">axe2C</name>
    <name evidence="5" type="ordered locus">CJA_0450</name>
</gene>
<evidence type="ECO:0000255" key="1">
    <source>
        <dbReference type="PROSITE-ProRule" id="PRU00303"/>
    </source>
</evidence>
<evidence type="ECO:0000269" key="2">
    <source>
    </source>
</evidence>
<evidence type="ECO:0000303" key="3">
    <source>
    </source>
</evidence>
<evidence type="ECO:0000305" key="4">
    <source>
    </source>
</evidence>
<evidence type="ECO:0000312" key="5">
    <source>
        <dbReference type="EMBL" id="ACE84991.1"/>
    </source>
</evidence>
<evidence type="ECO:0007829" key="6">
    <source>
        <dbReference type="PDB" id="2WAA"/>
    </source>
</evidence>
<organism>
    <name type="scientific">Cellvibrio japonicus (strain Ueda107)</name>
    <name type="common">Pseudomonas fluorescens subsp. cellulosa</name>
    <dbReference type="NCBI Taxonomy" id="498211"/>
    <lineage>
        <taxon>Bacteria</taxon>
        <taxon>Pseudomonadati</taxon>
        <taxon>Pseudomonadota</taxon>
        <taxon>Gammaproteobacteria</taxon>
        <taxon>Cellvibrionales</taxon>
        <taxon>Cellvibrionaceae</taxon>
        <taxon>Cellvibrio</taxon>
    </lineage>
</organism>